<organism>
    <name type="scientific">Paramagnetospirillum magneticum (strain ATCC 700264 / AMB-1)</name>
    <name type="common">Magnetospirillum magneticum</name>
    <dbReference type="NCBI Taxonomy" id="342108"/>
    <lineage>
        <taxon>Bacteria</taxon>
        <taxon>Pseudomonadati</taxon>
        <taxon>Pseudomonadota</taxon>
        <taxon>Alphaproteobacteria</taxon>
        <taxon>Rhodospirillales</taxon>
        <taxon>Magnetospirillaceae</taxon>
        <taxon>Paramagnetospirillum</taxon>
    </lineage>
</organism>
<protein>
    <recommendedName>
        <fullName evidence="1">Holo-[acyl-carrier-protein] synthase</fullName>
        <shortName evidence="1">Holo-ACP synthase</shortName>
        <ecNumber evidence="1">2.7.8.7</ecNumber>
    </recommendedName>
    <alternativeName>
        <fullName evidence="1">4'-phosphopantetheinyl transferase AcpS</fullName>
    </alternativeName>
</protein>
<name>ACPS_PARM1</name>
<sequence length="131" mass="14150">MIIGLGNDLVDIRRIEDSLERFGERFIAKVFTEAERATAERRSGRARSGAYAKRFAAKEALVKALGKDGVSWRDIEVANDGDGRPFLSLSGGAAALLARRIPAGMIARLHLSLSDDYPLAQAVVIVEAQPA</sequence>
<reference key="1">
    <citation type="journal article" date="2005" name="DNA Res.">
        <title>Complete genome sequence of the facultative anaerobic magnetotactic bacterium Magnetospirillum sp. strain AMB-1.</title>
        <authorList>
            <person name="Matsunaga T."/>
            <person name="Okamura Y."/>
            <person name="Fukuda Y."/>
            <person name="Wahyudi A.T."/>
            <person name="Murase Y."/>
            <person name="Takeyama H."/>
        </authorList>
    </citation>
    <scope>NUCLEOTIDE SEQUENCE [LARGE SCALE GENOMIC DNA]</scope>
    <source>
        <strain>ATCC 700264 / AMB-1</strain>
    </source>
</reference>
<proteinExistence type="inferred from homology"/>
<dbReference type="EC" id="2.7.8.7" evidence="1"/>
<dbReference type="EMBL" id="AP007255">
    <property type="protein sequence ID" value="BAE51060.1"/>
    <property type="molecule type" value="Genomic_DNA"/>
</dbReference>
<dbReference type="RefSeq" id="WP_011384654.1">
    <property type="nucleotide sequence ID" value="NC_007626.1"/>
</dbReference>
<dbReference type="SMR" id="Q2W515"/>
<dbReference type="STRING" id="342108.amb2256"/>
<dbReference type="KEGG" id="mag:amb2256"/>
<dbReference type="HOGENOM" id="CLU_089696_0_2_5"/>
<dbReference type="OrthoDB" id="517356at2"/>
<dbReference type="Proteomes" id="UP000007058">
    <property type="component" value="Chromosome"/>
</dbReference>
<dbReference type="GO" id="GO:0005737">
    <property type="term" value="C:cytoplasm"/>
    <property type="evidence" value="ECO:0007669"/>
    <property type="project" value="UniProtKB-SubCell"/>
</dbReference>
<dbReference type="GO" id="GO:0008897">
    <property type="term" value="F:holo-[acyl-carrier-protein] synthase activity"/>
    <property type="evidence" value="ECO:0007669"/>
    <property type="project" value="UniProtKB-UniRule"/>
</dbReference>
<dbReference type="GO" id="GO:0000287">
    <property type="term" value="F:magnesium ion binding"/>
    <property type="evidence" value="ECO:0007669"/>
    <property type="project" value="UniProtKB-UniRule"/>
</dbReference>
<dbReference type="GO" id="GO:0006633">
    <property type="term" value="P:fatty acid biosynthetic process"/>
    <property type="evidence" value="ECO:0007669"/>
    <property type="project" value="UniProtKB-UniRule"/>
</dbReference>
<dbReference type="Gene3D" id="3.90.470.20">
    <property type="entry name" value="4'-phosphopantetheinyl transferase domain"/>
    <property type="match status" value="1"/>
</dbReference>
<dbReference type="HAMAP" id="MF_00101">
    <property type="entry name" value="AcpS"/>
    <property type="match status" value="1"/>
</dbReference>
<dbReference type="InterPro" id="IPR008278">
    <property type="entry name" value="4-PPantetheinyl_Trfase_dom"/>
</dbReference>
<dbReference type="InterPro" id="IPR037143">
    <property type="entry name" value="4-PPantetheinyl_Trfase_dom_sf"/>
</dbReference>
<dbReference type="InterPro" id="IPR002582">
    <property type="entry name" value="ACPS"/>
</dbReference>
<dbReference type="InterPro" id="IPR004568">
    <property type="entry name" value="Ppantetheine-prot_Trfase_dom"/>
</dbReference>
<dbReference type="NCBIfam" id="TIGR00516">
    <property type="entry name" value="acpS"/>
    <property type="match status" value="1"/>
</dbReference>
<dbReference type="NCBIfam" id="TIGR00556">
    <property type="entry name" value="pantethn_trn"/>
    <property type="match status" value="1"/>
</dbReference>
<dbReference type="Pfam" id="PF01648">
    <property type="entry name" value="ACPS"/>
    <property type="match status" value="1"/>
</dbReference>
<dbReference type="SUPFAM" id="SSF56214">
    <property type="entry name" value="4'-phosphopantetheinyl transferase"/>
    <property type="match status" value="1"/>
</dbReference>
<gene>
    <name evidence="1" type="primary">acpS</name>
    <name type="ordered locus">amb2256</name>
</gene>
<feature type="chain" id="PRO_1000008447" description="Holo-[acyl-carrier-protein] synthase">
    <location>
        <begin position="1"/>
        <end position="131"/>
    </location>
</feature>
<feature type="binding site" evidence="1">
    <location>
        <position position="8"/>
    </location>
    <ligand>
        <name>Mg(2+)</name>
        <dbReference type="ChEBI" id="CHEBI:18420"/>
    </ligand>
</feature>
<feature type="binding site" evidence="1">
    <location>
        <position position="59"/>
    </location>
    <ligand>
        <name>Mg(2+)</name>
        <dbReference type="ChEBI" id="CHEBI:18420"/>
    </ligand>
</feature>
<comment type="function">
    <text evidence="1">Transfers the 4'-phosphopantetheine moiety from coenzyme A to a Ser of acyl-carrier-protein.</text>
</comment>
<comment type="catalytic activity">
    <reaction evidence="1">
        <text>apo-[ACP] + CoA = holo-[ACP] + adenosine 3',5'-bisphosphate + H(+)</text>
        <dbReference type="Rhea" id="RHEA:12068"/>
        <dbReference type="Rhea" id="RHEA-COMP:9685"/>
        <dbReference type="Rhea" id="RHEA-COMP:9690"/>
        <dbReference type="ChEBI" id="CHEBI:15378"/>
        <dbReference type="ChEBI" id="CHEBI:29999"/>
        <dbReference type="ChEBI" id="CHEBI:57287"/>
        <dbReference type="ChEBI" id="CHEBI:58343"/>
        <dbReference type="ChEBI" id="CHEBI:64479"/>
        <dbReference type="EC" id="2.7.8.7"/>
    </reaction>
</comment>
<comment type="cofactor">
    <cofactor evidence="1">
        <name>Mg(2+)</name>
        <dbReference type="ChEBI" id="CHEBI:18420"/>
    </cofactor>
</comment>
<comment type="subcellular location">
    <subcellularLocation>
        <location evidence="1">Cytoplasm</location>
    </subcellularLocation>
</comment>
<comment type="similarity">
    <text evidence="1">Belongs to the P-Pant transferase superfamily. AcpS family.</text>
</comment>
<keyword id="KW-0963">Cytoplasm</keyword>
<keyword id="KW-0275">Fatty acid biosynthesis</keyword>
<keyword id="KW-0276">Fatty acid metabolism</keyword>
<keyword id="KW-0444">Lipid biosynthesis</keyword>
<keyword id="KW-0443">Lipid metabolism</keyword>
<keyword id="KW-0460">Magnesium</keyword>
<keyword id="KW-0479">Metal-binding</keyword>
<keyword id="KW-0808">Transferase</keyword>
<accession>Q2W515</accession>
<evidence type="ECO:0000255" key="1">
    <source>
        <dbReference type="HAMAP-Rule" id="MF_00101"/>
    </source>
</evidence>